<organism>
    <name type="scientific">Psychrobacter sp. (strain PRwf-1)</name>
    <dbReference type="NCBI Taxonomy" id="349106"/>
    <lineage>
        <taxon>Bacteria</taxon>
        <taxon>Pseudomonadati</taxon>
        <taxon>Pseudomonadota</taxon>
        <taxon>Gammaproteobacteria</taxon>
        <taxon>Moraxellales</taxon>
        <taxon>Moraxellaceae</taxon>
        <taxon>Psychrobacter</taxon>
    </lineage>
</organism>
<gene>
    <name evidence="1" type="primary">fadA</name>
    <name type="ordered locus">PsycPRwf_2099</name>
</gene>
<protein>
    <recommendedName>
        <fullName evidence="1">3-ketoacyl-CoA thiolase</fullName>
        <ecNumber evidence="1">2.3.1.16</ecNumber>
    </recommendedName>
    <alternativeName>
        <fullName evidence="1">Acetyl-CoA acyltransferase</fullName>
    </alternativeName>
    <alternativeName>
        <fullName evidence="1">Beta-ketothiolase</fullName>
    </alternativeName>
    <alternativeName>
        <fullName evidence="1">Fatty acid oxidation complex subunit beta</fullName>
    </alternativeName>
</protein>
<dbReference type="EC" id="2.3.1.16" evidence="1"/>
<dbReference type="EMBL" id="CP000713">
    <property type="protein sequence ID" value="ABQ95039.1"/>
    <property type="molecule type" value="Genomic_DNA"/>
</dbReference>
<dbReference type="SMR" id="A5WH98"/>
<dbReference type="STRING" id="349106.PsycPRwf_2099"/>
<dbReference type="KEGG" id="prw:PsycPRwf_2099"/>
<dbReference type="eggNOG" id="COG0183">
    <property type="taxonomic scope" value="Bacteria"/>
</dbReference>
<dbReference type="HOGENOM" id="CLU_031026_2_2_6"/>
<dbReference type="UniPathway" id="UPA00659"/>
<dbReference type="GO" id="GO:0005737">
    <property type="term" value="C:cytoplasm"/>
    <property type="evidence" value="ECO:0007669"/>
    <property type="project" value="UniProtKB-SubCell"/>
</dbReference>
<dbReference type="GO" id="GO:0003988">
    <property type="term" value="F:acetyl-CoA C-acyltransferase activity"/>
    <property type="evidence" value="ECO:0007669"/>
    <property type="project" value="UniProtKB-UniRule"/>
</dbReference>
<dbReference type="GO" id="GO:0006635">
    <property type="term" value="P:fatty acid beta-oxidation"/>
    <property type="evidence" value="ECO:0007669"/>
    <property type="project" value="UniProtKB-UniRule"/>
</dbReference>
<dbReference type="GO" id="GO:0010124">
    <property type="term" value="P:phenylacetate catabolic process"/>
    <property type="evidence" value="ECO:0007669"/>
    <property type="project" value="TreeGrafter"/>
</dbReference>
<dbReference type="CDD" id="cd00751">
    <property type="entry name" value="thiolase"/>
    <property type="match status" value="1"/>
</dbReference>
<dbReference type="FunFam" id="3.40.47.10:FF:000010">
    <property type="entry name" value="Acetyl-CoA acetyltransferase (Thiolase)"/>
    <property type="match status" value="1"/>
</dbReference>
<dbReference type="Gene3D" id="3.40.47.10">
    <property type="match status" value="2"/>
</dbReference>
<dbReference type="HAMAP" id="MF_01620">
    <property type="entry name" value="FadA"/>
    <property type="match status" value="1"/>
</dbReference>
<dbReference type="InterPro" id="IPR012805">
    <property type="entry name" value="FadA"/>
</dbReference>
<dbReference type="InterPro" id="IPR002155">
    <property type="entry name" value="Thiolase"/>
</dbReference>
<dbReference type="InterPro" id="IPR016039">
    <property type="entry name" value="Thiolase-like"/>
</dbReference>
<dbReference type="InterPro" id="IPR050215">
    <property type="entry name" value="Thiolase-like_sf_Thiolase"/>
</dbReference>
<dbReference type="InterPro" id="IPR020615">
    <property type="entry name" value="Thiolase_acyl_enz_int_AS"/>
</dbReference>
<dbReference type="InterPro" id="IPR020610">
    <property type="entry name" value="Thiolase_AS"/>
</dbReference>
<dbReference type="InterPro" id="IPR020617">
    <property type="entry name" value="Thiolase_C"/>
</dbReference>
<dbReference type="InterPro" id="IPR020613">
    <property type="entry name" value="Thiolase_CS"/>
</dbReference>
<dbReference type="InterPro" id="IPR020616">
    <property type="entry name" value="Thiolase_N"/>
</dbReference>
<dbReference type="NCBIfam" id="TIGR01930">
    <property type="entry name" value="AcCoA-C-Actrans"/>
    <property type="match status" value="1"/>
</dbReference>
<dbReference type="NCBIfam" id="TIGR02445">
    <property type="entry name" value="fadA"/>
    <property type="match status" value="1"/>
</dbReference>
<dbReference type="NCBIfam" id="NF006510">
    <property type="entry name" value="PRK08947.1"/>
    <property type="match status" value="1"/>
</dbReference>
<dbReference type="PANTHER" id="PTHR43853:SF11">
    <property type="entry name" value="3-KETOACYL-COA THIOLASE FADA"/>
    <property type="match status" value="1"/>
</dbReference>
<dbReference type="PANTHER" id="PTHR43853">
    <property type="entry name" value="3-KETOACYL-COA THIOLASE, PEROXISOMAL"/>
    <property type="match status" value="1"/>
</dbReference>
<dbReference type="Pfam" id="PF02803">
    <property type="entry name" value="Thiolase_C"/>
    <property type="match status" value="1"/>
</dbReference>
<dbReference type="Pfam" id="PF00108">
    <property type="entry name" value="Thiolase_N"/>
    <property type="match status" value="1"/>
</dbReference>
<dbReference type="PIRSF" id="PIRSF000429">
    <property type="entry name" value="Ac-CoA_Ac_transf"/>
    <property type="match status" value="1"/>
</dbReference>
<dbReference type="SUPFAM" id="SSF53901">
    <property type="entry name" value="Thiolase-like"/>
    <property type="match status" value="2"/>
</dbReference>
<dbReference type="PROSITE" id="PS00098">
    <property type="entry name" value="THIOLASE_1"/>
    <property type="match status" value="1"/>
</dbReference>
<dbReference type="PROSITE" id="PS00737">
    <property type="entry name" value="THIOLASE_2"/>
    <property type="match status" value="1"/>
</dbReference>
<dbReference type="PROSITE" id="PS00099">
    <property type="entry name" value="THIOLASE_3"/>
    <property type="match status" value="1"/>
</dbReference>
<comment type="function">
    <text evidence="1">Catalyzes the final step of fatty acid oxidation in which acetyl-CoA is released and the CoA ester of a fatty acid two carbons shorter is formed.</text>
</comment>
<comment type="catalytic activity">
    <reaction evidence="1">
        <text>an acyl-CoA + acetyl-CoA = a 3-oxoacyl-CoA + CoA</text>
        <dbReference type="Rhea" id="RHEA:21564"/>
        <dbReference type="ChEBI" id="CHEBI:57287"/>
        <dbReference type="ChEBI" id="CHEBI:57288"/>
        <dbReference type="ChEBI" id="CHEBI:58342"/>
        <dbReference type="ChEBI" id="CHEBI:90726"/>
        <dbReference type="EC" id="2.3.1.16"/>
    </reaction>
</comment>
<comment type="pathway">
    <text evidence="1">Lipid metabolism; fatty acid beta-oxidation.</text>
</comment>
<comment type="subunit">
    <text evidence="1">Heterotetramer of two alpha chains (FadB) and two beta chains (FadA).</text>
</comment>
<comment type="subcellular location">
    <subcellularLocation>
        <location evidence="1">Cytoplasm</location>
    </subcellularLocation>
</comment>
<comment type="similarity">
    <text evidence="1">Belongs to the thiolase-like superfamily. Thiolase family.</text>
</comment>
<reference key="1">
    <citation type="submission" date="2007-05" db="EMBL/GenBank/DDBJ databases">
        <title>Complete sequence of chromosome of Psychrobacter sp. PRwf-1.</title>
        <authorList>
            <consortium name="US DOE Joint Genome Institute"/>
            <person name="Copeland A."/>
            <person name="Lucas S."/>
            <person name="Lapidus A."/>
            <person name="Barry K."/>
            <person name="Detter J.C."/>
            <person name="Glavina del Rio T."/>
            <person name="Hammon N."/>
            <person name="Israni S."/>
            <person name="Dalin E."/>
            <person name="Tice H."/>
            <person name="Pitluck S."/>
            <person name="Chain P."/>
            <person name="Malfatti S."/>
            <person name="Shin M."/>
            <person name="Vergez L."/>
            <person name="Schmutz J."/>
            <person name="Larimer F."/>
            <person name="Land M."/>
            <person name="Hauser L."/>
            <person name="Kyrpides N."/>
            <person name="Kim E."/>
            <person name="Tiedje J."/>
            <person name="Richardson P."/>
        </authorList>
    </citation>
    <scope>NUCLEOTIDE SEQUENCE [LARGE SCALE GENOMIC DNA]</scope>
    <source>
        <strain>PRwf-1</strain>
    </source>
</reference>
<sequence>MTTLSPKDVVIVDGVRTAMGKSKNGMFRNVRADSMSAELVRALVKRNDFDTNEVEDIIWGCVNQTLEQGMNIGRNIGLLADIPKTAGGQTVNRLCGSSMQALHTAAAQIMTNQGDVFIIGGVEHMGHVGMMHGIDINPEASKHYAKASNMMGLTAEMLGRMNGITREQQDEFGYESHRRAWAATQAGRFDNEIIGIEGHDAEGRLQLCTVDEVIRPDTSMESLAKLRPVFDPANGTVTAATSSALSDGASAMLVMSAQKAKDLGLKPRARIRSMAIAGCDAAIMGYGPVPATQKALKRAGLTVEDMQTIELNEAFAAQGLSVLKALNLLDKRDIINVNGGAIALGHPLGCSGARITVTLLNAMEQMDTEIGLATMCIGLGQGISTVIERV</sequence>
<proteinExistence type="inferred from homology"/>
<accession>A5WH98</accession>
<evidence type="ECO:0000255" key="1">
    <source>
        <dbReference type="HAMAP-Rule" id="MF_01620"/>
    </source>
</evidence>
<name>FADA_PSYWF</name>
<keyword id="KW-0012">Acyltransferase</keyword>
<keyword id="KW-0963">Cytoplasm</keyword>
<keyword id="KW-0276">Fatty acid metabolism</keyword>
<keyword id="KW-0442">Lipid degradation</keyword>
<keyword id="KW-0443">Lipid metabolism</keyword>
<keyword id="KW-0808">Transferase</keyword>
<feature type="chain" id="PRO_1000073633" description="3-ketoacyl-CoA thiolase">
    <location>
        <begin position="1"/>
        <end position="390"/>
    </location>
</feature>
<feature type="active site" description="Acyl-thioester intermediate" evidence="1">
    <location>
        <position position="95"/>
    </location>
</feature>
<feature type="active site" description="Proton acceptor" evidence="1">
    <location>
        <position position="346"/>
    </location>
</feature>
<feature type="active site" description="Proton acceptor" evidence="1">
    <location>
        <position position="376"/>
    </location>
</feature>